<keyword id="KW-0903">Direct protein sequencing</keyword>
<keyword id="KW-1015">Disulfide bond</keyword>
<keyword id="KW-0325">Glycoprotein</keyword>
<keyword id="KW-0378">Hydrolase</keyword>
<keyword id="KW-0472">Membrane</keyword>
<keyword id="KW-0576">Peroxisome</keyword>
<keyword id="KW-0659">Purine metabolism</keyword>
<keyword id="KW-1185">Reference proteome</keyword>
<keyword id="KW-0732">Signal</keyword>
<keyword id="KW-0812">Transmembrane</keyword>
<keyword id="KW-1133">Transmembrane helix</keyword>
<gene>
    <name type="primary">HIUH</name>
</gene>
<proteinExistence type="evidence at protein level"/>
<feature type="signal peptide" evidence="4">
    <location>
        <begin position="1"/>
        <end position="31"/>
    </location>
</feature>
<feature type="chain" id="PRO_0000380689" description="Hydroxyisourate hydrolase">
    <location>
        <begin position="32"/>
        <end position="560"/>
    </location>
</feature>
<feature type="topological domain" description="Peroxisomal" evidence="4">
    <location>
        <begin position="32"/>
        <end position="517"/>
    </location>
</feature>
<feature type="transmembrane region" description="Helical" evidence="4">
    <location>
        <begin position="518"/>
        <end position="538"/>
    </location>
</feature>
<feature type="topological domain" description="Cytoplasmic" evidence="4">
    <location>
        <begin position="539"/>
        <end position="560"/>
    </location>
</feature>
<feature type="active site" description="Proton donor" evidence="8">
    <location>
        <position position="199"/>
    </location>
</feature>
<feature type="active site" description="Nucleophile" evidence="8">
    <location>
        <position position="408"/>
    </location>
</feature>
<feature type="binding site" evidence="2">
    <location>
        <position position="54"/>
    </location>
    <ligand>
        <name>a beta-D-glucoside</name>
        <dbReference type="ChEBI" id="CHEBI:22798"/>
    </ligand>
</feature>
<feature type="binding site" evidence="2">
    <location>
        <begin position="198"/>
        <end position="199"/>
    </location>
    <ligand>
        <name>a beta-D-glucoside</name>
        <dbReference type="ChEBI" id="CHEBI:22798"/>
    </ligand>
</feature>
<feature type="binding site" evidence="2">
    <location>
        <position position="343"/>
    </location>
    <ligand>
        <name>a beta-D-glucoside</name>
        <dbReference type="ChEBI" id="CHEBI:22798"/>
    </ligand>
</feature>
<feature type="binding site" evidence="3">
    <location>
        <position position="408"/>
    </location>
    <ligand>
        <name>a beta-D-glucoside</name>
        <dbReference type="ChEBI" id="CHEBI:22798"/>
    </ligand>
</feature>
<feature type="binding site" evidence="1">
    <location>
        <position position="467"/>
    </location>
    <ligand>
        <name>a beta-D-glucoside</name>
        <dbReference type="ChEBI" id="CHEBI:22798"/>
    </ligand>
</feature>
<feature type="glycosylation site" description="N-linked (GlcNAc...) asparagine" evidence="5">
    <location>
        <position position="34"/>
    </location>
</feature>
<feature type="glycosylation site" description="N-linked (GlcNAc...) asparagine" evidence="5">
    <location>
        <position position="226"/>
    </location>
</feature>
<feature type="glycosylation site" description="N-linked (GlcNAc...) asparagine" evidence="5">
    <location>
        <position position="231"/>
    </location>
</feature>
<feature type="glycosylation site" description="N-linked (GlcNAc...) asparagine" evidence="5">
    <location>
        <position position="347"/>
    </location>
</feature>
<feature type="glycosylation site" description="N-linked (GlcNAc...) asparagine" evidence="5">
    <location>
        <position position="416"/>
    </location>
</feature>
<feature type="glycosylation site" description="N-linked (GlcNAc...) asparagine" evidence="5">
    <location>
        <position position="489"/>
    </location>
</feature>
<feature type="disulfide bond" evidence="2">
    <location>
        <begin position="218"/>
        <end position="223"/>
    </location>
</feature>
<feature type="mutagenesis site" description="Loss of function." evidence="7">
    <original>E</original>
    <variation>A</variation>
    <location>
        <position position="199"/>
    </location>
</feature>
<feature type="mutagenesis site" description="Loss of function." evidence="7">
    <original>E</original>
    <variation>A</variation>
    <location>
        <position position="408"/>
    </location>
</feature>
<name>HIUH_SOYBN</name>
<dbReference type="EC" id="3.5.2.17" evidence="6"/>
<dbReference type="EMBL" id="AF486839">
    <property type="protein sequence ID" value="AAL92115.1"/>
    <property type="molecule type" value="mRNA"/>
</dbReference>
<dbReference type="RefSeq" id="NP_001236535.1">
    <property type="nucleotide sequence ID" value="NM_001249606.1"/>
</dbReference>
<dbReference type="SMR" id="Q8S3J3"/>
<dbReference type="FunCoup" id="Q8S3J3">
    <property type="interactions" value="269"/>
</dbReference>
<dbReference type="STRING" id="3847.Q8S3J3"/>
<dbReference type="CAZy" id="GH1">
    <property type="family name" value="Glycoside Hydrolase Family 1"/>
</dbReference>
<dbReference type="GlyCosmos" id="Q8S3J3">
    <property type="glycosylation" value="6 sites, No reported glycans"/>
</dbReference>
<dbReference type="PaxDb" id="3847-GLYMA02G02230.3"/>
<dbReference type="GeneID" id="547954"/>
<dbReference type="KEGG" id="gmx:547954"/>
<dbReference type="eggNOG" id="KOG0626">
    <property type="taxonomic scope" value="Eukaryota"/>
</dbReference>
<dbReference type="HOGENOM" id="CLU_001859_1_0_1"/>
<dbReference type="InParanoid" id="Q8S3J3"/>
<dbReference type="OrthoDB" id="65569at2759"/>
<dbReference type="BioCyc" id="MetaCyc:MONOMER-13506"/>
<dbReference type="BRENDA" id="3.5.2.17">
    <property type="organism ID" value="2483"/>
</dbReference>
<dbReference type="SABIO-RK" id="Q8S3J3"/>
<dbReference type="UniPathway" id="UPA00394">
    <property type="reaction ID" value="UER00651"/>
</dbReference>
<dbReference type="Proteomes" id="UP000008827">
    <property type="component" value="Unplaced"/>
</dbReference>
<dbReference type="GO" id="GO:0005778">
    <property type="term" value="C:peroxisomal membrane"/>
    <property type="evidence" value="ECO:0007669"/>
    <property type="project" value="UniProtKB-SubCell"/>
</dbReference>
<dbReference type="GO" id="GO:0008422">
    <property type="term" value="F:beta-glucosidase activity"/>
    <property type="evidence" value="ECO:0000318"/>
    <property type="project" value="GO_Central"/>
</dbReference>
<dbReference type="GO" id="GO:0033971">
    <property type="term" value="F:hydroxyisourate hydrolase activity"/>
    <property type="evidence" value="ECO:0007669"/>
    <property type="project" value="UniProtKB-EC"/>
</dbReference>
<dbReference type="GO" id="GO:0005975">
    <property type="term" value="P:carbohydrate metabolic process"/>
    <property type="evidence" value="ECO:0007669"/>
    <property type="project" value="InterPro"/>
</dbReference>
<dbReference type="GO" id="GO:0006144">
    <property type="term" value="P:purine nucleobase metabolic process"/>
    <property type="evidence" value="ECO:0007669"/>
    <property type="project" value="UniProtKB-KW"/>
</dbReference>
<dbReference type="GO" id="GO:0019628">
    <property type="term" value="P:urate catabolic process"/>
    <property type="evidence" value="ECO:0007669"/>
    <property type="project" value="UniProtKB-UniPathway"/>
</dbReference>
<dbReference type="FunFam" id="3.20.20.80:FF:000069">
    <property type="entry name" value="Beta-glucosidase 1"/>
    <property type="match status" value="1"/>
</dbReference>
<dbReference type="Gene3D" id="3.20.20.80">
    <property type="entry name" value="Glycosidases"/>
    <property type="match status" value="1"/>
</dbReference>
<dbReference type="InterPro" id="IPR001360">
    <property type="entry name" value="Glyco_hydro_1"/>
</dbReference>
<dbReference type="InterPro" id="IPR033132">
    <property type="entry name" value="Glyco_hydro_1_N_CS"/>
</dbReference>
<dbReference type="InterPro" id="IPR017853">
    <property type="entry name" value="Glycoside_hydrolase_SF"/>
</dbReference>
<dbReference type="PANTHER" id="PTHR10353:SF29">
    <property type="entry name" value="BETA-GLUCOSIDASE 11"/>
    <property type="match status" value="1"/>
</dbReference>
<dbReference type="PANTHER" id="PTHR10353">
    <property type="entry name" value="GLYCOSYL HYDROLASE"/>
    <property type="match status" value="1"/>
</dbReference>
<dbReference type="Pfam" id="PF00232">
    <property type="entry name" value="Glyco_hydro_1"/>
    <property type="match status" value="1"/>
</dbReference>
<dbReference type="SUPFAM" id="SSF51445">
    <property type="entry name" value="(Trans)glycosidases"/>
    <property type="match status" value="1"/>
</dbReference>
<dbReference type="PROSITE" id="PS00653">
    <property type="entry name" value="GLYCOSYL_HYDROL_F1_2"/>
    <property type="match status" value="1"/>
</dbReference>
<protein>
    <recommendedName>
        <fullName>Hydroxyisourate hydrolase</fullName>
        <shortName>HIU hydrolase</shortName>
        <shortName>HIUHase</shortName>
        <ecNumber evidence="6">3.5.2.17</ecNumber>
    </recommendedName>
</protein>
<reference key="1">
    <citation type="journal article" date="2002" name="Plant Physiol.">
        <title>Cloning and expression of the gene for soybean hydroxyisourate hydrolase. Localization and implications for function and mechanism.</title>
        <authorList>
            <person name="Raychaudhuri A."/>
            <person name="Tipton P.A."/>
        </authorList>
    </citation>
    <scope>NUCLEOTIDE SEQUENCE [MRNA]</scope>
    <scope>FUNCTION</scope>
    <scope>MUTAGENESIS OF GLU-199 AND GLU-408</scope>
    <scope>SUBCELLULAR LOCATION</scope>
    <scope>TISSUE SPECIFICITY</scope>
</reference>
<reference key="2">
    <citation type="journal article" date="1999" name="J. Biol. Chem.">
        <title>Identification and purification of hydroxyisourate hydrolase, a novel ureide-metabolizing enzyme.</title>
        <authorList>
            <person name="Sarma A.D."/>
            <person name="Serfozo P."/>
            <person name="Kahn K."/>
            <person name="Tipton P.A."/>
        </authorList>
    </citation>
    <scope>PROTEIN SEQUENCE OF 32-47</scope>
    <scope>SUBUNIT</scope>
    <scope>CATALYTIC ACTIVITY</scope>
    <scope>BIOPHYSICOCHEMICAL PROPERTIES</scope>
</reference>
<accession>Q8S3J3</accession>
<sequence length="560" mass="63767">MMEPPQTRLMINVFIVSFLALLVNLVVGVLGADNYSRDDFPLDFVFGSGTSAYQVEGAANKDGRTPSIWDTFAYAGYAHGENGDVACDGYHKYKEDVQLMLETGLDAYRFSISWSRLLPNGRGPVNPKGLQYSNNLINELISNGIQPHATLYNFDLPQVLEDEYGGWISRDIIRDFTYYAEVEFREFGDRVLYWTTVNEPNVFALGGYDQGNSPPRRCSPPFCATNDTMGNSTYEPYLAVHHILLSHSSAARLYWRKYRDKQHGFVGISIYTFGIFPQTNTEKDRVASQRARDFFVGWIMEPLQYGDYPISMKTNAGERIPAFTNHESKQVKGSFDFIGVIHYTNLNVSDNSDALKNQLRDFTADMAANIFGEDLFSNEEYLITPWGLRQELNKFKLLYGNPPIFIHENGQRTASNSSLQDVDKGEILHGYIGSVLDALRDASNIKGYFRMAFPGFVRVARWIQVSFGLYYVDRDDPQLKKIPKLFCKNGTTGFLKGRRTSILDLFELEQDPITCSKSPIIFSKISKWVLASLLFLIQHKIKFMWREPLPGQIPLKLVMF</sequence>
<organism>
    <name type="scientific">Glycine max</name>
    <name type="common">Soybean</name>
    <name type="synonym">Glycine hispida</name>
    <dbReference type="NCBI Taxonomy" id="3847"/>
    <lineage>
        <taxon>Eukaryota</taxon>
        <taxon>Viridiplantae</taxon>
        <taxon>Streptophyta</taxon>
        <taxon>Embryophyta</taxon>
        <taxon>Tracheophyta</taxon>
        <taxon>Spermatophyta</taxon>
        <taxon>Magnoliopsida</taxon>
        <taxon>eudicotyledons</taxon>
        <taxon>Gunneridae</taxon>
        <taxon>Pentapetalae</taxon>
        <taxon>rosids</taxon>
        <taxon>fabids</taxon>
        <taxon>Fabales</taxon>
        <taxon>Fabaceae</taxon>
        <taxon>Papilionoideae</taxon>
        <taxon>50 kb inversion clade</taxon>
        <taxon>NPAAA clade</taxon>
        <taxon>indigoferoid/millettioid clade</taxon>
        <taxon>Phaseoleae</taxon>
        <taxon>Glycine</taxon>
        <taxon>Glycine subgen. Soja</taxon>
    </lineage>
</organism>
<evidence type="ECO:0000250" key="1">
    <source>
        <dbReference type="UniProtKB" id="Q1XH05"/>
    </source>
</evidence>
<evidence type="ECO:0000250" key="2">
    <source>
        <dbReference type="UniProtKB" id="Q7XSK0"/>
    </source>
</evidence>
<evidence type="ECO:0000250" key="3">
    <source>
        <dbReference type="UniProtKB" id="Q9SPP9"/>
    </source>
</evidence>
<evidence type="ECO:0000255" key="4"/>
<evidence type="ECO:0000255" key="5">
    <source>
        <dbReference type="PROSITE-ProRule" id="PRU00498"/>
    </source>
</evidence>
<evidence type="ECO:0000269" key="6">
    <source>
    </source>
</evidence>
<evidence type="ECO:0000269" key="7">
    <source>
    </source>
</evidence>
<evidence type="ECO:0000305" key="8"/>
<comment type="function">
    <text evidence="7">Involved in the conversion of hydroxyisourate to ureides such as allantoin, the major form of nitrogen transport in legumes.</text>
</comment>
<comment type="catalytic activity">
    <reaction evidence="6">
        <text>5-hydroxyisourate + H2O = 5-hydroxy-2-oxo-4-ureido-2,5-dihydro-1H-imidazole-5-carboxylate + H(+)</text>
        <dbReference type="Rhea" id="RHEA:23736"/>
        <dbReference type="ChEBI" id="CHEBI:15377"/>
        <dbReference type="ChEBI" id="CHEBI:15378"/>
        <dbReference type="ChEBI" id="CHEBI:18072"/>
        <dbReference type="ChEBI" id="CHEBI:58639"/>
        <dbReference type="EC" id="3.5.2.17"/>
    </reaction>
</comment>
<comment type="biophysicochemical properties">
    <kinetics>
        <KM evidence="6">15 uM for hydroxyisourate</KM>
    </kinetics>
</comment>
<comment type="pathway">
    <text>Purine metabolism; urate degradation; (S)-allantoin from urate: step 2/3.</text>
</comment>
<comment type="subunit">
    <text evidence="6">Monomer.</text>
</comment>
<comment type="subcellular location">
    <subcellularLocation>
        <location evidence="7">Peroxisome membrane</location>
        <topology evidence="7">Single-pass type I membrane protein</topology>
    </subcellularLocation>
</comment>
<comment type="tissue specificity">
    <text evidence="7">Highly expressed in uninfected root nodules. Detected in leaves, stems and roots.</text>
</comment>
<comment type="developmental stage">
    <text>Expression in nodules increased with increasing plant age up to 21 days, then decreased.</text>
</comment>
<comment type="similarity">
    <text evidence="8">Belongs to the glycosyl hydrolase 1 family.</text>
</comment>